<sequence length="480" mass="55417">MYQLLFQRLGVTLTAGNDKKTSIPSNQLVGHLIGLILLCDDLNEAFADFQALLQNGIAISSSDRGYLVFDAHVTDCGCHLRAQMIQDVFSYFKNHEVTKLYIFDAVAKKLNELKRHCISLIQTLCWENTSAQKLGFPKNIKSYEELLKLLQWDTADISSAIADSFPMNPNNADQNEKGLVWNVTKLEVVLEFLYCSHFLSKNKIYNKKENLDSVTIDFNNAFEKRQLLSNKFHCQGTGKLGVGCRYLKHAKQSKNSFISVVSNLQSRLALLSIAFLKSRCTLPCDIEALQKNSPRNVSAIPNFLHFLILEREWSQNETPILLAVRKLHEHEHCDLYFEARINPHTFEWTLQHKECCEFEHHTPYIVITALATGSSTTKTAQLLAWELMKAQKNFRQFWLTFMSQHRQYPFEIEHDEDQLLETQVSQDIFELYCQSKREDRNQILFDDSTSLLPKHIFTEYPSIFFNFQKNVCSKHGALVI</sequence>
<gene>
    <name evidence="2" type="primary">PUL1</name>
    <name type="ordered locus">KLLA0_C19184g</name>
</gene>
<feature type="chain" id="PRO_0000445898" description="Probable cyclodipeptide synthase PUL1">
    <location>
        <begin position="1"/>
        <end position="480"/>
    </location>
</feature>
<protein>
    <recommendedName>
        <fullName evidence="2">Probable cyclodipeptide synthase PUL1</fullName>
        <shortName evidence="2">CDPS PUL1</shortName>
        <ecNumber evidence="3">6.-.-.-</ecNumber>
    </recommendedName>
    <alternativeName>
        <fullName evidence="2">Pulcherrimin biosynthesis cluster protein 1</fullName>
    </alternativeName>
</protein>
<keyword id="KW-0436">Ligase</keyword>
<keyword id="KW-1185">Reference proteome</keyword>
<dbReference type="EC" id="6.-.-.-" evidence="3"/>
<dbReference type="EMBL" id="CR382123">
    <property type="protein sequence ID" value="CAH01907.1"/>
    <property type="molecule type" value="Genomic_DNA"/>
</dbReference>
<dbReference type="RefSeq" id="XP_453056.1">
    <property type="nucleotide sequence ID" value="XM_453056.1"/>
</dbReference>
<dbReference type="STRING" id="284590.Q6CSN3"/>
<dbReference type="PaxDb" id="284590-Q6CSN3"/>
<dbReference type="GeneID" id="2892648"/>
<dbReference type="KEGG" id="kla:KLLA0_C19184g"/>
<dbReference type="HOGENOM" id="CLU_568653_0_0_1"/>
<dbReference type="InParanoid" id="Q6CSN3"/>
<dbReference type="OMA" id="GCHLRAQ"/>
<dbReference type="Proteomes" id="UP000000598">
    <property type="component" value="Chromosome C"/>
</dbReference>
<dbReference type="GO" id="GO:0016874">
    <property type="term" value="F:ligase activity"/>
    <property type="evidence" value="ECO:0007669"/>
    <property type="project" value="UniProtKB-KW"/>
</dbReference>
<evidence type="ECO:0000269" key="1">
    <source>
    </source>
</evidence>
<evidence type="ECO:0000303" key="2">
    <source>
    </source>
</evidence>
<evidence type="ECO:0000305" key="3">
    <source>
    </source>
</evidence>
<name>PUL1_KLULA</name>
<proteinExistence type="predicted"/>
<organism>
    <name type="scientific">Kluyveromyces lactis (strain ATCC 8585 / CBS 2359 / DSM 70799 / NBRC 1267 / NRRL Y-1140 / WM37)</name>
    <name type="common">Yeast</name>
    <name type="synonym">Candida sphaerica</name>
    <dbReference type="NCBI Taxonomy" id="284590"/>
    <lineage>
        <taxon>Eukaryota</taxon>
        <taxon>Fungi</taxon>
        <taxon>Dikarya</taxon>
        <taxon>Ascomycota</taxon>
        <taxon>Saccharomycotina</taxon>
        <taxon>Saccharomycetes</taxon>
        <taxon>Saccharomycetales</taxon>
        <taxon>Saccharomycetaceae</taxon>
        <taxon>Kluyveromyces</taxon>
    </lineage>
</organism>
<reference key="1">
    <citation type="journal article" date="2004" name="Nature">
        <title>Genome evolution in yeasts.</title>
        <authorList>
            <person name="Dujon B."/>
            <person name="Sherman D."/>
            <person name="Fischer G."/>
            <person name="Durrens P."/>
            <person name="Casaregola S."/>
            <person name="Lafontaine I."/>
            <person name="de Montigny J."/>
            <person name="Marck C."/>
            <person name="Neuveglise C."/>
            <person name="Talla E."/>
            <person name="Goffard N."/>
            <person name="Frangeul L."/>
            <person name="Aigle M."/>
            <person name="Anthouard V."/>
            <person name="Babour A."/>
            <person name="Barbe V."/>
            <person name="Barnay S."/>
            <person name="Blanchin S."/>
            <person name="Beckerich J.-M."/>
            <person name="Beyne E."/>
            <person name="Bleykasten C."/>
            <person name="Boisrame A."/>
            <person name="Boyer J."/>
            <person name="Cattolico L."/>
            <person name="Confanioleri F."/>
            <person name="de Daruvar A."/>
            <person name="Despons L."/>
            <person name="Fabre E."/>
            <person name="Fairhead C."/>
            <person name="Ferry-Dumazet H."/>
            <person name="Groppi A."/>
            <person name="Hantraye F."/>
            <person name="Hennequin C."/>
            <person name="Jauniaux N."/>
            <person name="Joyet P."/>
            <person name="Kachouri R."/>
            <person name="Kerrest A."/>
            <person name="Koszul R."/>
            <person name="Lemaire M."/>
            <person name="Lesur I."/>
            <person name="Ma L."/>
            <person name="Muller H."/>
            <person name="Nicaud J.-M."/>
            <person name="Nikolski M."/>
            <person name="Oztas S."/>
            <person name="Ozier-Kalogeropoulos O."/>
            <person name="Pellenz S."/>
            <person name="Potier S."/>
            <person name="Richard G.-F."/>
            <person name="Straub M.-L."/>
            <person name="Suleau A."/>
            <person name="Swennen D."/>
            <person name="Tekaia F."/>
            <person name="Wesolowski-Louvel M."/>
            <person name="Westhof E."/>
            <person name="Wirth B."/>
            <person name="Zeniou-Meyer M."/>
            <person name="Zivanovic Y."/>
            <person name="Bolotin-Fukuhara M."/>
            <person name="Thierry A."/>
            <person name="Bouchier C."/>
            <person name="Caudron B."/>
            <person name="Scarpelli C."/>
            <person name="Gaillardin C."/>
            <person name="Weissenbach J."/>
            <person name="Wincker P."/>
            <person name="Souciet J.-L."/>
        </authorList>
    </citation>
    <scope>NUCLEOTIDE SEQUENCE [LARGE SCALE GENOMIC DNA]</scope>
    <source>
        <strain>ATCC 8585 / CBS 2359 / DSM 70799 / NBRC 1267 / NRRL Y-1140 / WM37</strain>
    </source>
</reference>
<reference key="2">
    <citation type="journal article" date="2018" name="Proc. Natl. Acad. Sci. U.S.A.">
        <title>Functional and evolutionary characterization of a secondary metabolite gene cluster in budding yeasts.</title>
        <authorList>
            <person name="Krause D.J."/>
            <person name="Kominek J."/>
            <person name="Opulente D.A."/>
            <person name="Shen X.X."/>
            <person name="Zhou X."/>
            <person name="Langdon Q.K."/>
            <person name="DeVirgilio J."/>
            <person name="Hulfachor A.B."/>
            <person name="Kurtzman C.P."/>
            <person name="Rokas A."/>
            <person name="Hittinger C.T."/>
        </authorList>
    </citation>
    <scope>IDENTIFICATION</scope>
    <scope>DISRUPTION PHENOTYPE</scope>
    <scope>FUNCTION</scope>
    <scope>PATHWAY</scope>
</reference>
<comment type="function">
    <text evidence="1 3">Probable cyclodipeptide synthase; part of the PUL gene cluster that mediates the formation of pulcherrimin, a red iron-containing pigment composed of two cyclized and modified leucine molecules that acts as a siderophore, a chelator that binds iron outside the cell for subsequent uptake (PubMed:30297402). Two leucine molecules are cyclized via a cyclodipeptide synthase, and the resulting diketopiperazine is oxidized by a cytochrome P450 monooxygenase to generate pulcherriminic acid (PA), which can then spontaneously bind iron to form pulcherrimin (PubMed:30297402). The probable cyclodipeptide synthase PUL1 and the cytochrome P450 monooxygenase PUL2 encode the enzymes responsible for the two-step pulcherrimin biosynthesis pathway (Probable).</text>
</comment>
<comment type="pathway">
    <text evidence="1">Siderophore biosynthesis.</text>
</comment>
<comment type="disruption phenotype">
    <text evidence="1">Impairs pulcherrimin production and subsequent red pigmentation.</text>
</comment>
<accession>Q6CSN3</accession>